<proteinExistence type="inferred from homology"/>
<accession>Q8TRR2</accession>
<comment type="function">
    <text evidence="1">Located at the top of the head of the 30S subunit, it contacts several helices of the 16S rRNA. In the 70S ribosome it contacts the 23S rRNA (bridge B1a) and protein L5 of the 50S subunit (bridge B1b), connecting the 2 subunits; these bridges are implicated in subunit movement.</text>
</comment>
<comment type="subunit">
    <text evidence="1">Part of the 30S ribosomal subunit. Forms a loose heterodimer with protein S19. Forms two bridges to the 50S subunit in the 70S ribosome.</text>
</comment>
<comment type="similarity">
    <text evidence="1">Belongs to the universal ribosomal protein uS13 family.</text>
</comment>
<comment type="sequence caution" evidence="3">
    <conflict type="erroneous initiation">
        <sequence resource="EMBL-CDS" id="AAM04532"/>
    </conflict>
</comment>
<feature type="chain" id="PRO_0000132180" description="Small ribosomal subunit protein uS13">
    <location>
        <begin position="1"/>
        <end position="162"/>
    </location>
</feature>
<feature type="region of interest" description="Disordered" evidence="2">
    <location>
        <begin position="142"/>
        <end position="162"/>
    </location>
</feature>
<keyword id="KW-1185">Reference proteome</keyword>
<keyword id="KW-0687">Ribonucleoprotein</keyword>
<keyword id="KW-0689">Ribosomal protein</keyword>
<keyword id="KW-0694">RNA-binding</keyword>
<keyword id="KW-0699">rRNA-binding</keyword>
<name>RS13_METAC</name>
<organism>
    <name type="scientific">Methanosarcina acetivorans (strain ATCC 35395 / DSM 2834 / JCM 12185 / C2A)</name>
    <dbReference type="NCBI Taxonomy" id="188937"/>
    <lineage>
        <taxon>Archaea</taxon>
        <taxon>Methanobacteriati</taxon>
        <taxon>Methanobacteriota</taxon>
        <taxon>Stenosarchaea group</taxon>
        <taxon>Methanomicrobia</taxon>
        <taxon>Methanosarcinales</taxon>
        <taxon>Methanosarcinaceae</taxon>
        <taxon>Methanosarcina</taxon>
    </lineage>
</organism>
<reference key="1">
    <citation type="journal article" date="2002" name="Genome Res.">
        <title>The genome of Methanosarcina acetivorans reveals extensive metabolic and physiological diversity.</title>
        <authorList>
            <person name="Galagan J.E."/>
            <person name="Nusbaum C."/>
            <person name="Roy A."/>
            <person name="Endrizzi M.G."/>
            <person name="Macdonald P."/>
            <person name="FitzHugh W."/>
            <person name="Calvo S."/>
            <person name="Engels R."/>
            <person name="Smirnov S."/>
            <person name="Atnoor D."/>
            <person name="Brown A."/>
            <person name="Allen N."/>
            <person name="Naylor J."/>
            <person name="Stange-Thomann N."/>
            <person name="DeArellano K."/>
            <person name="Johnson R."/>
            <person name="Linton L."/>
            <person name="McEwan P."/>
            <person name="McKernan K."/>
            <person name="Talamas J."/>
            <person name="Tirrell A."/>
            <person name="Ye W."/>
            <person name="Zimmer A."/>
            <person name="Barber R.D."/>
            <person name="Cann I."/>
            <person name="Graham D.E."/>
            <person name="Grahame D.A."/>
            <person name="Guss A.M."/>
            <person name="Hedderich R."/>
            <person name="Ingram-Smith C."/>
            <person name="Kuettner H.C."/>
            <person name="Krzycki J.A."/>
            <person name="Leigh J.A."/>
            <person name="Li W."/>
            <person name="Liu J."/>
            <person name="Mukhopadhyay B."/>
            <person name="Reeve J.N."/>
            <person name="Smith K."/>
            <person name="Springer T.A."/>
            <person name="Umayam L.A."/>
            <person name="White O."/>
            <person name="White R.H."/>
            <person name="de Macario E.C."/>
            <person name="Ferry J.G."/>
            <person name="Jarrell K.F."/>
            <person name="Jing H."/>
            <person name="Macario A.J.L."/>
            <person name="Paulsen I.T."/>
            <person name="Pritchett M."/>
            <person name="Sowers K.R."/>
            <person name="Swanson R.V."/>
            <person name="Zinder S.H."/>
            <person name="Lander E."/>
            <person name="Metcalf W.W."/>
            <person name="Birren B."/>
        </authorList>
    </citation>
    <scope>NUCLEOTIDE SEQUENCE [LARGE SCALE GENOMIC DNA]</scope>
    <source>
        <strain>ATCC 35395 / DSM 2834 / JCM 12185 / C2A</strain>
    </source>
</reference>
<gene>
    <name evidence="1" type="primary">rps13</name>
    <name type="ordered locus">MA_1108</name>
</gene>
<dbReference type="EMBL" id="AE010299">
    <property type="protein sequence ID" value="AAM04532.1"/>
    <property type="status" value="ALT_INIT"/>
    <property type="molecule type" value="Genomic_DNA"/>
</dbReference>
<dbReference type="RefSeq" id="WP_048066175.1">
    <property type="nucleotide sequence ID" value="NC_003552.1"/>
</dbReference>
<dbReference type="SMR" id="Q8TRR2"/>
<dbReference type="FunCoup" id="Q8TRR2">
    <property type="interactions" value="188"/>
</dbReference>
<dbReference type="STRING" id="188937.MA_1108"/>
<dbReference type="EnsemblBacteria" id="AAM04532">
    <property type="protein sequence ID" value="AAM04532"/>
    <property type="gene ID" value="MA_1108"/>
</dbReference>
<dbReference type="GeneID" id="1472997"/>
<dbReference type="KEGG" id="mac:MA_1108"/>
<dbReference type="HOGENOM" id="CLU_103849_0_1_2"/>
<dbReference type="InParanoid" id="Q8TRR2"/>
<dbReference type="OrthoDB" id="372127at2157"/>
<dbReference type="PhylomeDB" id="Q8TRR2"/>
<dbReference type="Proteomes" id="UP000002487">
    <property type="component" value="Chromosome"/>
</dbReference>
<dbReference type="GO" id="GO:0005829">
    <property type="term" value="C:cytosol"/>
    <property type="evidence" value="ECO:0000318"/>
    <property type="project" value="GO_Central"/>
</dbReference>
<dbReference type="GO" id="GO:0015935">
    <property type="term" value="C:small ribosomal subunit"/>
    <property type="evidence" value="ECO:0000318"/>
    <property type="project" value="GO_Central"/>
</dbReference>
<dbReference type="GO" id="GO:0019843">
    <property type="term" value="F:rRNA binding"/>
    <property type="evidence" value="ECO:0007669"/>
    <property type="project" value="UniProtKB-UniRule"/>
</dbReference>
<dbReference type="GO" id="GO:0003735">
    <property type="term" value="F:structural constituent of ribosome"/>
    <property type="evidence" value="ECO:0007669"/>
    <property type="project" value="InterPro"/>
</dbReference>
<dbReference type="GO" id="GO:0006412">
    <property type="term" value="P:translation"/>
    <property type="evidence" value="ECO:0007669"/>
    <property type="project" value="UniProtKB-UniRule"/>
</dbReference>
<dbReference type="FunFam" id="1.10.8.50:FF:000001">
    <property type="entry name" value="30S ribosomal protein S13"/>
    <property type="match status" value="1"/>
</dbReference>
<dbReference type="FunFam" id="4.10.910.10:FF:000002">
    <property type="entry name" value="40S ribosomal protein S18"/>
    <property type="match status" value="1"/>
</dbReference>
<dbReference type="Gene3D" id="1.10.8.50">
    <property type="match status" value="1"/>
</dbReference>
<dbReference type="Gene3D" id="4.10.910.10">
    <property type="entry name" value="30s ribosomal protein s13, domain 2"/>
    <property type="match status" value="1"/>
</dbReference>
<dbReference type="HAMAP" id="MF_01315">
    <property type="entry name" value="Ribosomal_uS13"/>
    <property type="match status" value="1"/>
</dbReference>
<dbReference type="InterPro" id="IPR027437">
    <property type="entry name" value="Rbsml_uS13_C"/>
</dbReference>
<dbReference type="InterPro" id="IPR001892">
    <property type="entry name" value="Ribosomal_uS13"/>
</dbReference>
<dbReference type="InterPro" id="IPR010979">
    <property type="entry name" value="Ribosomal_uS13-like_H2TH"/>
</dbReference>
<dbReference type="InterPro" id="IPR019977">
    <property type="entry name" value="Ribosomal_uS13_archaeal"/>
</dbReference>
<dbReference type="InterPro" id="IPR018269">
    <property type="entry name" value="Ribosomal_uS13_CS"/>
</dbReference>
<dbReference type="NCBIfam" id="NF003140">
    <property type="entry name" value="PRK04053.1"/>
    <property type="match status" value="1"/>
</dbReference>
<dbReference type="NCBIfam" id="TIGR03629">
    <property type="entry name" value="uS13_arch"/>
    <property type="match status" value="1"/>
</dbReference>
<dbReference type="PANTHER" id="PTHR10871">
    <property type="entry name" value="30S RIBOSOMAL PROTEIN S13/40S RIBOSOMAL PROTEIN S18"/>
    <property type="match status" value="1"/>
</dbReference>
<dbReference type="PANTHER" id="PTHR10871:SF3">
    <property type="entry name" value="SMALL RIBOSOMAL SUBUNIT PROTEIN US13"/>
    <property type="match status" value="1"/>
</dbReference>
<dbReference type="Pfam" id="PF00416">
    <property type="entry name" value="Ribosomal_S13"/>
    <property type="match status" value="1"/>
</dbReference>
<dbReference type="PIRSF" id="PIRSF002134">
    <property type="entry name" value="Ribosomal_S13"/>
    <property type="match status" value="1"/>
</dbReference>
<dbReference type="SUPFAM" id="SSF46946">
    <property type="entry name" value="S13-like H2TH domain"/>
    <property type="match status" value="1"/>
</dbReference>
<dbReference type="PROSITE" id="PS00646">
    <property type="entry name" value="RIBOSOMAL_S13_1"/>
    <property type="match status" value="1"/>
</dbReference>
<dbReference type="PROSITE" id="PS50159">
    <property type="entry name" value="RIBOSOMAL_S13_2"/>
    <property type="match status" value="1"/>
</dbReference>
<sequence>MLYALQWRKYMVEENNNEELRHLVRIMNTDLQGAKPVQYALTGLPGVGRRTAKLIAKGAGVDPSAILGYLPEEEVAKLDTAIGKFEDIVPSWMLNRQKDLATGQDKHLLGTDILLTFREDINNLKKVRAYRGLRHERGLKVRGQRTKSTGRRGSTVGVSRKK</sequence>
<protein>
    <recommendedName>
        <fullName evidence="1">Small ribosomal subunit protein uS13</fullName>
    </recommendedName>
    <alternativeName>
        <fullName evidence="3">30S ribosomal protein S13</fullName>
    </alternativeName>
</protein>
<evidence type="ECO:0000255" key="1">
    <source>
        <dbReference type="HAMAP-Rule" id="MF_01315"/>
    </source>
</evidence>
<evidence type="ECO:0000256" key="2">
    <source>
        <dbReference type="SAM" id="MobiDB-lite"/>
    </source>
</evidence>
<evidence type="ECO:0000305" key="3"/>